<name>RR2_ORYSA</name>
<dbReference type="EMBL" id="AY522331">
    <property type="protein sequence ID" value="AAS46177.1"/>
    <property type="status" value="ALT_INIT"/>
    <property type="molecule type" value="Genomic_DNA"/>
</dbReference>
<dbReference type="RefSeq" id="YP_009305297.1">
    <property type="nucleotide sequence ID" value="NC_031333.1"/>
</dbReference>
<dbReference type="SMR" id="P0C480"/>
<dbReference type="GeneID" id="29141354"/>
<dbReference type="GO" id="GO:0009507">
    <property type="term" value="C:chloroplast"/>
    <property type="evidence" value="ECO:0007669"/>
    <property type="project" value="UniProtKB-SubCell"/>
</dbReference>
<dbReference type="GO" id="GO:0005763">
    <property type="term" value="C:mitochondrial small ribosomal subunit"/>
    <property type="evidence" value="ECO:0007669"/>
    <property type="project" value="TreeGrafter"/>
</dbReference>
<dbReference type="GO" id="GO:0009536">
    <property type="term" value="C:plastid"/>
    <property type="evidence" value="ECO:0000305"/>
    <property type="project" value="Gramene"/>
</dbReference>
<dbReference type="GO" id="GO:0003735">
    <property type="term" value="F:structural constituent of ribosome"/>
    <property type="evidence" value="ECO:0007669"/>
    <property type="project" value="InterPro"/>
</dbReference>
<dbReference type="GO" id="GO:0006412">
    <property type="term" value="P:translation"/>
    <property type="evidence" value="ECO:0007669"/>
    <property type="project" value="UniProtKB-UniRule"/>
</dbReference>
<dbReference type="CDD" id="cd01425">
    <property type="entry name" value="RPS2"/>
    <property type="match status" value="1"/>
</dbReference>
<dbReference type="FunFam" id="1.10.287.610:FF:000001">
    <property type="entry name" value="30S ribosomal protein S2"/>
    <property type="match status" value="1"/>
</dbReference>
<dbReference type="Gene3D" id="3.40.50.10490">
    <property type="entry name" value="Glucose-6-phosphate isomerase like protein, domain 1"/>
    <property type="match status" value="1"/>
</dbReference>
<dbReference type="Gene3D" id="1.10.287.610">
    <property type="entry name" value="Helix hairpin bin"/>
    <property type="match status" value="1"/>
</dbReference>
<dbReference type="HAMAP" id="MF_00291_B">
    <property type="entry name" value="Ribosomal_uS2_B"/>
    <property type="match status" value="1"/>
</dbReference>
<dbReference type="InterPro" id="IPR001865">
    <property type="entry name" value="Ribosomal_uS2"/>
</dbReference>
<dbReference type="InterPro" id="IPR005706">
    <property type="entry name" value="Ribosomal_uS2_bac/mit/plastid"/>
</dbReference>
<dbReference type="InterPro" id="IPR018130">
    <property type="entry name" value="Ribosomal_uS2_CS"/>
</dbReference>
<dbReference type="InterPro" id="IPR023591">
    <property type="entry name" value="Ribosomal_uS2_flav_dom_sf"/>
</dbReference>
<dbReference type="NCBIfam" id="TIGR01011">
    <property type="entry name" value="rpsB_bact"/>
    <property type="match status" value="1"/>
</dbReference>
<dbReference type="PANTHER" id="PTHR12534">
    <property type="entry name" value="30S RIBOSOMAL PROTEIN S2 PROKARYOTIC AND ORGANELLAR"/>
    <property type="match status" value="1"/>
</dbReference>
<dbReference type="PANTHER" id="PTHR12534:SF0">
    <property type="entry name" value="SMALL RIBOSOMAL SUBUNIT PROTEIN US2M"/>
    <property type="match status" value="1"/>
</dbReference>
<dbReference type="Pfam" id="PF00318">
    <property type="entry name" value="Ribosomal_S2"/>
    <property type="match status" value="1"/>
</dbReference>
<dbReference type="PRINTS" id="PR00395">
    <property type="entry name" value="RIBOSOMALS2"/>
</dbReference>
<dbReference type="SUPFAM" id="SSF52313">
    <property type="entry name" value="Ribosomal protein S2"/>
    <property type="match status" value="1"/>
</dbReference>
<dbReference type="PROSITE" id="PS00962">
    <property type="entry name" value="RIBOSOMAL_S2_1"/>
    <property type="match status" value="1"/>
</dbReference>
<dbReference type="PROSITE" id="PS00963">
    <property type="entry name" value="RIBOSOMAL_S2_2"/>
    <property type="match status" value="1"/>
</dbReference>
<gene>
    <name type="primary">rps2</name>
    <name type="ORF">PA040</name>
</gene>
<evidence type="ECO:0000305" key="1"/>
<geneLocation type="chloroplast"/>
<organism>
    <name type="scientific">Oryza sativa</name>
    <name type="common">Rice</name>
    <dbReference type="NCBI Taxonomy" id="4530"/>
    <lineage>
        <taxon>Eukaryota</taxon>
        <taxon>Viridiplantae</taxon>
        <taxon>Streptophyta</taxon>
        <taxon>Embryophyta</taxon>
        <taxon>Tracheophyta</taxon>
        <taxon>Spermatophyta</taxon>
        <taxon>Magnoliopsida</taxon>
        <taxon>Liliopsida</taxon>
        <taxon>Poales</taxon>
        <taxon>Poaceae</taxon>
        <taxon>BOP clade</taxon>
        <taxon>Oryzoideae</taxon>
        <taxon>Oryzeae</taxon>
        <taxon>Oryzinae</taxon>
        <taxon>Oryza</taxon>
    </lineage>
</organism>
<keyword id="KW-0150">Chloroplast</keyword>
<keyword id="KW-0934">Plastid</keyword>
<keyword id="KW-0687">Ribonucleoprotein</keyword>
<keyword id="KW-0689">Ribosomal protein</keyword>
<feature type="chain" id="PRO_0000134308" description="Small ribosomal subunit protein uS2c">
    <location>
        <begin position="1"/>
        <end position="236"/>
    </location>
</feature>
<accession>P0C480</accession>
<accession>P12145</accession>
<accession>Q6QY17</accession>
<accession>Q6QY80</accession>
<comment type="subcellular location">
    <subcellularLocation>
        <location>Plastid</location>
        <location>Chloroplast</location>
    </subcellularLocation>
</comment>
<comment type="similarity">
    <text evidence="1">Belongs to the universal ribosomal protein uS2 family.</text>
</comment>
<comment type="sequence caution" evidence="1">
    <conflict type="erroneous initiation">
        <sequence resource="EMBL-CDS" id="AAS46177"/>
    </conflict>
</comment>
<proteinExistence type="inferred from homology"/>
<reference key="1">
    <citation type="journal article" date="2004" name="Plant Physiol.">
        <title>A comparison of rice chloroplast genomes.</title>
        <authorList>
            <person name="Tang J."/>
            <person name="Xia H."/>
            <person name="Cao M."/>
            <person name="Zhang X."/>
            <person name="Zeng W."/>
            <person name="Hu S."/>
            <person name="Tong W."/>
            <person name="Wang J."/>
            <person name="Wang J."/>
            <person name="Yu J."/>
            <person name="Yang H."/>
            <person name="Zhu L."/>
        </authorList>
    </citation>
    <scope>NUCLEOTIDE SEQUENCE [LARGE SCALE GENOMIC DNA]</scope>
    <source>
        <strain>cv. PA64s</strain>
    </source>
</reference>
<protein>
    <recommendedName>
        <fullName evidence="1">Small ribosomal subunit protein uS2c</fullName>
    </recommendedName>
    <alternativeName>
        <fullName>30S ribosomal protein S2, chloroplastic</fullName>
    </alternativeName>
</protein>
<sequence>MTRRYWNINLKEMIEAGVHFGHGIKKWNPKMAPYISAKRKGTHITNLARTTRFLSEACDLVFDAASQGKSFLIVGTKKRAADLVASAAIRARCHYVNKKWFSGMLTNWSITKTRLSQFRDLRAEEKMEKFHHLPKRDVAILKRKLSTLQRYLGGIKYMTRLPDIVIVLDQQKEYIALRECAILGIPTISLADTNCDPDLANISIPANDDTMTSIRLILNKLVFAICEGRSLYIRNH</sequence>